<dbReference type="EMBL" id="AE004969">
    <property type="protein sequence ID" value="AAW90297.1"/>
    <property type="status" value="ALT_INIT"/>
    <property type="molecule type" value="Genomic_DNA"/>
</dbReference>
<dbReference type="RefSeq" id="WP_003696096.1">
    <property type="nucleotide sequence ID" value="NC_002946.2"/>
</dbReference>
<dbReference type="RefSeq" id="YP_208709.2">
    <property type="nucleotide sequence ID" value="NC_002946.2"/>
</dbReference>
<dbReference type="SMR" id="Q5F690"/>
<dbReference type="STRING" id="242231.NGO_1672"/>
<dbReference type="KEGG" id="ngo:NGO_1672"/>
<dbReference type="HOGENOM" id="CLU_2233632_0_0_4"/>
<dbReference type="Proteomes" id="UP000000535">
    <property type="component" value="Chromosome"/>
</dbReference>
<dbReference type="GO" id="GO:0008657">
    <property type="term" value="F:DNA topoisomerase type II (double strand cut, ATP-hydrolyzing) inhibitor activity"/>
    <property type="evidence" value="ECO:0007669"/>
    <property type="project" value="UniProtKB-UniRule"/>
</dbReference>
<dbReference type="GO" id="GO:0008270">
    <property type="term" value="F:zinc ion binding"/>
    <property type="evidence" value="ECO:0007669"/>
    <property type="project" value="UniProtKB-UniRule"/>
</dbReference>
<dbReference type="GO" id="GO:0006355">
    <property type="term" value="P:regulation of DNA-templated transcription"/>
    <property type="evidence" value="ECO:0007669"/>
    <property type="project" value="InterPro"/>
</dbReference>
<dbReference type="Gene3D" id="3.30.50.10">
    <property type="entry name" value="Erythroid Transcription Factor GATA-1, subunit A"/>
    <property type="match status" value="1"/>
</dbReference>
<dbReference type="HAMAP" id="MF_00649">
    <property type="entry name" value="DNA_gyrase_inhibitor_YacG"/>
    <property type="match status" value="1"/>
</dbReference>
<dbReference type="InterPro" id="IPR005584">
    <property type="entry name" value="DNA_gyrase_inhibitor_YacG"/>
</dbReference>
<dbReference type="InterPro" id="IPR013088">
    <property type="entry name" value="Znf_NHR/GATA"/>
</dbReference>
<dbReference type="PANTHER" id="PTHR36150">
    <property type="entry name" value="DNA GYRASE INHIBITOR YACG"/>
    <property type="match status" value="1"/>
</dbReference>
<dbReference type="PANTHER" id="PTHR36150:SF1">
    <property type="entry name" value="DNA GYRASE INHIBITOR YACG"/>
    <property type="match status" value="1"/>
</dbReference>
<dbReference type="Pfam" id="PF03884">
    <property type="entry name" value="YacG"/>
    <property type="match status" value="1"/>
</dbReference>
<dbReference type="SUPFAM" id="SSF57716">
    <property type="entry name" value="Glucocorticoid receptor-like (DNA-binding domain)"/>
    <property type="match status" value="1"/>
</dbReference>
<comment type="function">
    <text evidence="1">Inhibits all the catalytic activities of DNA gyrase by preventing its interaction with DNA. Acts by binding directly to the C-terminal domain of GyrB, which probably disrupts DNA binding by the gyrase.</text>
</comment>
<comment type="cofactor">
    <cofactor evidence="1">
        <name>Zn(2+)</name>
        <dbReference type="ChEBI" id="CHEBI:29105"/>
    </cofactor>
    <text evidence="1">Binds 1 zinc ion.</text>
</comment>
<comment type="subunit">
    <text evidence="1">Interacts with GyrB.</text>
</comment>
<comment type="similarity">
    <text evidence="1">Belongs to the DNA gyrase inhibitor YacG family.</text>
</comment>
<comment type="sequence caution" evidence="2">
    <conflict type="erroneous initiation">
        <sequence resource="EMBL-CDS" id="AAW90297"/>
    </conflict>
    <text>Extended N-terminus.</text>
</comment>
<gene>
    <name evidence="1" type="primary">yacG</name>
    <name type="ordered locus">NGO_1672</name>
</gene>
<protein>
    <recommendedName>
        <fullName evidence="1">DNA gyrase inhibitor YacG</fullName>
    </recommendedName>
</protein>
<reference key="1">
    <citation type="submission" date="2003-03" db="EMBL/GenBank/DDBJ databases">
        <title>The complete genome sequence of Neisseria gonorrhoeae.</title>
        <authorList>
            <person name="Lewis L.A."/>
            <person name="Gillaspy A.F."/>
            <person name="McLaughlin R.E."/>
            <person name="Gipson M."/>
            <person name="Ducey T.F."/>
            <person name="Ownbey T."/>
            <person name="Hartman K."/>
            <person name="Nydick C."/>
            <person name="Carson M.B."/>
            <person name="Vaughn J."/>
            <person name="Thomson C."/>
            <person name="Song L."/>
            <person name="Lin S."/>
            <person name="Yuan X."/>
            <person name="Najar F."/>
            <person name="Zhan M."/>
            <person name="Ren Q."/>
            <person name="Zhu H."/>
            <person name="Qi S."/>
            <person name="Kenton S.M."/>
            <person name="Lai H."/>
            <person name="White J.D."/>
            <person name="Clifton S."/>
            <person name="Roe B.A."/>
            <person name="Dyer D.W."/>
        </authorList>
    </citation>
    <scope>NUCLEOTIDE SEQUENCE [LARGE SCALE GENOMIC DNA]</scope>
    <source>
        <strain>ATCC 700825 / FA 1090</strain>
    </source>
</reference>
<proteinExistence type="inferred from homology"/>
<name>YACG_NEIG1</name>
<keyword id="KW-0479">Metal-binding</keyword>
<keyword id="KW-1185">Reference proteome</keyword>
<keyword id="KW-0862">Zinc</keyword>
<evidence type="ECO:0000255" key="1">
    <source>
        <dbReference type="HAMAP-Rule" id="MF_00649"/>
    </source>
</evidence>
<evidence type="ECO:0000305" key="2"/>
<feature type="chain" id="PRO_0000211708" description="DNA gyrase inhibitor YacG">
    <location>
        <begin position="1"/>
        <end position="69"/>
    </location>
</feature>
<feature type="binding site" evidence="1">
    <location>
        <position position="13"/>
    </location>
    <ligand>
        <name>Zn(2+)</name>
        <dbReference type="ChEBI" id="CHEBI:29105"/>
    </ligand>
</feature>
<feature type="binding site" evidence="1">
    <location>
        <position position="16"/>
    </location>
    <ligand>
        <name>Zn(2+)</name>
        <dbReference type="ChEBI" id="CHEBI:29105"/>
    </ligand>
</feature>
<feature type="binding site" evidence="1">
    <location>
        <position position="32"/>
    </location>
    <ligand>
        <name>Zn(2+)</name>
        <dbReference type="ChEBI" id="CHEBI:29105"/>
    </ligand>
</feature>
<feature type="binding site" evidence="1">
    <location>
        <position position="36"/>
    </location>
    <ligand>
        <name>Zn(2+)</name>
        <dbReference type="ChEBI" id="CHEBI:29105"/>
    </ligand>
</feature>
<accession>Q5F690</accession>
<organism>
    <name type="scientific">Neisseria gonorrhoeae (strain ATCC 700825 / FA 1090)</name>
    <dbReference type="NCBI Taxonomy" id="242231"/>
    <lineage>
        <taxon>Bacteria</taxon>
        <taxon>Pseudomonadati</taxon>
        <taxon>Pseudomonadota</taxon>
        <taxon>Betaproteobacteria</taxon>
        <taxon>Neisseriales</taxon>
        <taxon>Neisseriaceae</taxon>
        <taxon>Neisseria</taxon>
    </lineage>
</organism>
<sequence>MAESRQTRLQVKCPTCQTAVVWKPENAFRPFCSQRCKLIDLGGWADGKYTVSGQTESLPEISEPDGAYR</sequence>